<proteinExistence type="inferred from homology"/>
<protein>
    <recommendedName>
        <fullName evidence="1">Ribosome maturation factor RimM</fullName>
    </recommendedName>
</protein>
<name>RIMM_CORJK</name>
<sequence length="187" mass="20401">MELQIGRVIKPHGVRGEVVVDPTTDTPELRFATGEVLKGKQAGKELSLTVRSFRPHQGRLLVTFEEIADRTAAESLRGVRFFAAPVHDEDDDGFYDHELEGLTAYLLAPGTDLKGDEIQLGDLVGEVVAVEHTPAGQLLVILIDAESQLPTAGKEVLVPFRHQIVPVVDLEEEILVLTPPEGLLELS</sequence>
<evidence type="ECO:0000255" key="1">
    <source>
        <dbReference type="HAMAP-Rule" id="MF_00014"/>
    </source>
</evidence>
<keyword id="KW-0143">Chaperone</keyword>
<keyword id="KW-0963">Cytoplasm</keyword>
<keyword id="KW-1185">Reference proteome</keyword>
<keyword id="KW-0690">Ribosome biogenesis</keyword>
<keyword id="KW-0698">rRNA processing</keyword>
<feature type="chain" id="PRO_0000244122" description="Ribosome maturation factor RimM">
    <location>
        <begin position="1"/>
        <end position="187"/>
    </location>
</feature>
<feature type="domain" description="PRC barrel" evidence="1">
    <location>
        <begin position="91"/>
        <end position="183"/>
    </location>
</feature>
<reference key="1">
    <citation type="journal article" date="2005" name="J. Bacteriol.">
        <title>Complete genome sequence and analysis of the multiresistant nosocomial pathogen Corynebacterium jeikeium K411, a lipid-requiring bacterium of the human skin flora.</title>
        <authorList>
            <person name="Tauch A."/>
            <person name="Kaiser O."/>
            <person name="Hain T."/>
            <person name="Goesmann A."/>
            <person name="Weisshaar B."/>
            <person name="Albersmeier A."/>
            <person name="Bekel T."/>
            <person name="Bischoff N."/>
            <person name="Brune I."/>
            <person name="Chakraborty T."/>
            <person name="Kalinowski J."/>
            <person name="Meyer F."/>
            <person name="Rupp O."/>
            <person name="Schneiker S."/>
            <person name="Viehoever P."/>
            <person name="Puehler A."/>
        </authorList>
    </citation>
    <scope>NUCLEOTIDE SEQUENCE [LARGE SCALE GENOMIC DNA]</scope>
    <source>
        <strain>K411</strain>
    </source>
</reference>
<comment type="function">
    <text evidence="1">An accessory protein needed during the final step in the assembly of 30S ribosomal subunit, possibly for assembly of the head region. Essential for efficient processing of 16S rRNA. May be needed both before and after RbfA during the maturation of 16S rRNA. It has affinity for free ribosomal 30S subunits but not for 70S ribosomes.</text>
</comment>
<comment type="subunit">
    <text evidence="1">Binds ribosomal protein uS19.</text>
</comment>
<comment type="subcellular location">
    <subcellularLocation>
        <location evidence="1">Cytoplasm</location>
    </subcellularLocation>
</comment>
<comment type="domain">
    <text evidence="1">The PRC barrel domain binds ribosomal protein uS19.</text>
</comment>
<comment type="similarity">
    <text evidence="1">Belongs to the RimM family.</text>
</comment>
<accession>Q4JV02</accession>
<gene>
    <name evidence="1" type="primary">rimM</name>
    <name type="ordered locus">jk1191</name>
</gene>
<organism>
    <name type="scientific">Corynebacterium jeikeium (strain K411)</name>
    <dbReference type="NCBI Taxonomy" id="306537"/>
    <lineage>
        <taxon>Bacteria</taxon>
        <taxon>Bacillati</taxon>
        <taxon>Actinomycetota</taxon>
        <taxon>Actinomycetes</taxon>
        <taxon>Mycobacteriales</taxon>
        <taxon>Corynebacteriaceae</taxon>
        <taxon>Corynebacterium</taxon>
    </lineage>
</organism>
<dbReference type="EMBL" id="CR931997">
    <property type="protein sequence ID" value="CAI37355.1"/>
    <property type="molecule type" value="Genomic_DNA"/>
</dbReference>
<dbReference type="RefSeq" id="WP_005295319.1">
    <property type="nucleotide sequence ID" value="NC_007164.1"/>
</dbReference>
<dbReference type="SMR" id="Q4JV02"/>
<dbReference type="STRING" id="306537.jk1191"/>
<dbReference type="GeneID" id="92738710"/>
<dbReference type="KEGG" id="cjk:jk1191"/>
<dbReference type="eggNOG" id="COG0806">
    <property type="taxonomic scope" value="Bacteria"/>
</dbReference>
<dbReference type="HOGENOM" id="CLU_077636_0_0_11"/>
<dbReference type="OrthoDB" id="5381335at2"/>
<dbReference type="Proteomes" id="UP000000545">
    <property type="component" value="Chromosome"/>
</dbReference>
<dbReference type="GO" id="GO:0005737">
    <property type="term" value="C:cytoplasm"/>
    <property type="evidence" value="ECO:0007669"/>
    <property type="project" value="UniProtKB-SubCell"/>
</dbReference>
<dbReference type="GO" id="GO:0005840">
    <property type="term" value="C:ribosome"/>
    <property type="evidence" value="ECO:0007669"/>
    <property type="project" value="InterPro"/>
</dbReference>
<dbReference type="GO" id="GO:0043022">
    <property type="term" value="F:ribosome binding"/>
    <property type="evidence" value="ECO:0007669"/>
    <property type="project" value="InterPro"/>
</dbReference>
<dbReference type="GO" id="GO:0042274">
    <property type="term" value="P:ribosomal small subunit biogenesis"/>
    <property type="evidence" value="ECO:0007669"/>
    <property type="project" value="UniProtKB-UniRule"/>
</dbReference>
<dbReference type="GO" id="GO:0006364">
    <property type="term" value="P:rRNA processing"/>
    <property type="evidence" value="ECO:0007669"/>
    <property type="project" value="UniProtKB-UniRule"/>
</dbReference>
<dbReference type="Gene3D" id="2.30.30.240">
    <property type="entry name" value="PRC-barrel domain"/>
    <property type="match status" value="1"/>
</dbReference>
<dbReference type="Gene3D" id="2.40.30.60">
    <property type="entry name" value="RimM"/>
    <property type="match status" value="1"/>
</dbReference>
<dbReference type="HAMAP" id="MF_00014">
    <property type="entry name" value="Ribosome_mat_RimM"/>
    <property type="match status" value="1"/>
</dbReference>
<dbReference type="InterPro" id="IPR011033">
    <property type="entry name" value="PRC_barrel-like_sf"/>
</dbReference>
<dbReference type="InterPro" id="IPR056792">
    <property type="entry name" value="PRC_RimM"/>
</dbReference>
<dbReference type="InterPro" id="IPR011961">
    <property type="entry name" value="RimM"/>
</dbReference>
<dbReference type="InterPro" id="IPR002676">
    <property type="entry name" value="RimM_N"/>
</dbReference>
<dbReference type="InterPro" id="IPR036976">
    <property type="entry name" value="RimM_N_sf"/>
</dbReference>
<dbReference type="InterPro" id="IPR009000">
    <property type="entry name" value="Transl_B-barrel_sf"/>
</dbReference>
<dbReference type="NCBIfam" id="TIGR02273">
    <property type="entry name" value="16S_RimM"/>
    <property type="match status" value="1"/>
</dbReference>
<dbReference type="PANTHER" id="PTHR33692">
    <property type="entry name" value="RIBOSOME MATURATION FACTOR RIMM"/>
    <property type="match status" value="1"/>
</dbReference>
<dbReference type="PANTHER" id="PTHR33692:SF1">
    <property type="entry name" value="RIBOSOME MATURATION FACTOR RIMM"/>
    <property type="match status" value="1"/>
</dbReference>
<dbReference type="Pfam" id="PF24986">
    <property type="entry name" value="PRC_RimM"/>
    <property type="match status" value="1"/>
</dbReference>
<dbReference type="Pfam" id="PF01782">
    <property type="entry name" value="RimM"/>
    <property type="match status" value="1"/>
</dbReference>
<dbReference type="SUPFAM" id="SSF50346">
    <property type="entry name" value="PRC-barrel domain"/>
    <property type="match status" value="1"/>
</dbReference>
<dbReference type="SUPFAM" id="SSF50447">
    <property type="entry name" value="Translation proteins"/>
    <property type="match status" value="1"/>
</dbReference>